<gene>
    <name evidence="1" type="primary">tsaC</name>
    <name type="synonym">rimN</name>
    <name type="ordered locus">PP_0070</name>
</gene>
<dbReference type="EC" id="2.7.7.87" evidence="1"/>
<dbReference type="EMBL" id="AE015451">
    <property type="protein sequence ID" value="AAN65704.1"/>
    <property type="molecule type" value="Genomic_DNA"/>
</dbReference>
<dbReference type="RefSeq" id="NP_742240.1">
    <property type="nucleotide sequence ID" value="NC_002947.4"/>
</dbReference>
<dbReference type="RefSeq" id="WP_010951476.1">
    <property type="nucleotide sequence ID" value="NZ_CP169744.1"/>
</dbReference>
<dbReference type="SMR" id="Q88RQ9"/>
<dbReference type="STRING" id="160488.PP_0070"/>
<dbReference type="PaxDb" id="160488-PP_0070"/>
<dbReference type="KEGG" id="ppu:PP_0070"/>
<dbReference type="PATRIC" id="fig|160488.4.peg.75"/>
<dbReference type="eggNOG" id="COG0009">
    <property type="taxonomic scope" value="Bacteria"/>
</dbReference>
<dbReference type="HOGENOM" id="CLU_031397_6_0_6"/>
<dbReference type="OrthoDB" id="9814580at2"/>
<dbReference type="PhylomeDB" id="Q88RQ9"/>
<dbReference type="BioCyc" id="PPUT160488:G1G01-73-MONOMER"/>
<dbReference type="Proteomes" id="UP000000556">
    <property type="component" value="Chromosome"/>
</dbReference>
<dbReference type="GO" id="GO:0005737">
    <property type="term" value="C:cytoplasm"/>
    <property type="evidence" value="ECO:0007669"/>
    <property type="project" value="UniProtKB-SubCell"/>
</dbReference>
<dbReference type="GO" id="GO:0005524">
    <property type="term" value="F:ATP binding"/>
    <property type="evidence" value="ECO:0007669"/>
    <property type="project" value="UniProtKB-UniRule"/>
</dbReference>
<dbReference type="GO" id="GO:0003725">
    <property type="term" value="F:double-stranded RNA binding"/>
    <property type="evidence" value="ECO:0007669"/>
    <property type="project" value="InterPro"/>
</dbReference>
<dbReference type="GO" id="GO:0061710">
    <property type="term" value="F:L-threonylcarbamoyladenylate synthase"/>
    <property type="evidence" value="ECO:0007669"/>
    <property type="project" value="UniProtKB-EC"/>
</dbReference>
<dbReference type="GO" id="GO:0000049">
    <property type="term" value="F:tRNA binding"/>
    <property type="evidence" value="ECO:0007669"/>
    <property type="project" value="TreeGrafter"/>
</dbReference>
<dbReference type="GO" id="GO:0006450">
    <property type="term" value="P:regulation of translational fidelity"/>
    <property type="evidence" value="ECO:0007669"/>
    <property type="project" value="TreeGrafter"/>
</dbReference>
<dbReference type="GO" id="GO:0002949">
    <property type="term" value="P:tRNA threonylcarbamoyladenosine modification"/>
    <property type="evidence" value="ECO:0007669"/>
    <property type="project" value="UniProtKB-UniRule"/>
</dbReference>
<dbReference type="FunFam" id="3.90.870.10:FF:000004">
    <property type="entry name" value="Threonylcarbamoyl-AMP synthase"/>
    <property type="match status" value="1"/>
</dbReference>
<dbReference type="Gene3D" id="3.90.870.10">
    <property type="entry name" value="DHBP synthase"/>
    <property type="match status" value="1"/>
</dbReference>
<dbReference type="HAMAP" id="MF_01852">
    <property type="entry name" value="TsaC"/>
    <property type="match status" value="1"/>
</dbReference>
<dbReference type="InterPro" id="IPR017945">
    <property type="entry name" value="DHBP_synth_RibB-like_a/b_dom"/>
</dbReference>
<dbReference type="InterPro" id="IPR006070">
    <property type="entry name" value="Sua5-like_dom"/>
</dbReference>
<dbReference type="InterPro" id="IPR023535">
    <property type="entry name" value="TC-AMP_synthase"/>
</dbReference>
<dbReference type="InterPro" id="IPR050156">
    <property type="entry name" value="TC-AMP_synthase_SUA5"/>
</dbReference>
<dbReference type="PANTHER" id="PTHR17490">
    <property type="entry name" value="SUA5"/>
    <property type="match status" value="1"/>
</dbReference>
<dbReference type="PANTHER" id="PTHR17490:SF18">
    <property type="entry name" value="THREONYLCARBAMOYL-AMP SYNTHASE"/>
    <property type="match status" value="1"/>
</dbReference>
<dbReference type="Pfam" id="PF01300">
    <property type="entry name" value="Sua5_yciO_yrdC"/>
    <property type="match status" value="1"/>
</dbReference>
<dbReference type="SUPFAM" id="SSF55821">
    <property type="entry name" value="YrdC/RibB"/>
    <property type="match status" value="1"/>
</dbReference>
<dbReference type="PROSITE" id="PS51163">
    <property type="entry name" value="YRDC"/>
    <property type="match status" value="1"/>
</dbReference>
<reference key="1">
    <citation type="journal article" date="2002" name="Environ. Microbiol.">
        <title>Complete genome sequence and comparative analysis of the metabolically versatile Pseudomonas putida KT2440.</title>
        <authorList>
            <person name="Nelson K.E."/>
            <person name="Weinel C."/>
            <person name="Paulsen I.T."/>
            <person name="Dodson R.J."/>
            <person name="Hilbert H."/>
            <person name="Martins dos Santos V.A.P."/>
            <person name="Fouts D.E."/>
            <person name="Gill S.R."/>
            <person name="Pop M."/>
            <person name="Holmes M."/>
            <person name="Brinkac L.M."/>
            <person name="Beanan M.J."/>
            <person name="DeBoy R.T."/>
            <person name="Daugherty S.C."/>
            <person name="Kolonay J.F."/>
            <person name="Madupu R."/>
            <person name="Nelson W.C."/>
            <person name="White O."/>
            <person name="Peterson J.D."/>
            <person name="Khouri H.M."/>
            <person name="Hance I."/>
            <person name="Chris Lee P."/>
            <person name="Holtzapple E.K."/>
            <person name="Scanlan D."/>
            <person name="Tran K."/>
            <person name="Moazzez A."/>
            <person name="Utterback T.R."/>
            <person name="Rizzo M."/>
            <person name="Lee K."/>
            <person name="Kosack D."/>
            <person name="Moestl D."/>
            <person name="Wedler H."/>
            <person name="Lauber J."/>
            <person name="Stjepandic D."/>
            <person name="Hoheisel J."/>
            <person name="Straetz M."/>
            <person name="Heim S."/>
            <person name="Kiewitz C."/>
            <person name="Eisen J.A."/>
            <person name="Timmis K.N."/>
            <person name="Duesterhoeft A."/>
            <person name="Tuemmler B."/>
            <person name="Fraser C.M."/>
        </authorList>
    </citation>
    <scope>NUCLEOTIDE SEQUENCE [LARGE SCALE GENOMIC DNA]</scope>
    <source>
        <strain>ATCC 47054 / DSM 6125 / CFBP 8728 / NCIMB 11950 / KT2440</strain>
    </source>
</reference>
<proteinExistence type="inferred from homology"/>
<keyword id="KW-0067">ATP-binding</keyword>
<keyword id="KW-0963">Cytoplasm</keyword>
<keyword id="KW-0547">Nucleotide-binding</keyword>
<keyword id="KW-0548">Nucleotidyltransferase</keyword>
<keyword id="KW-1185">Reference proteome</keyword>
<keyword id="KW-0808">Transferase</keyword>
<keyword id="KW-0819">tRNA processing</keyword>
<accession>Q88RQ9</accession>
<evidence type="ECO:0000255" key="1">
    <source>
        <dbReference type="HAMAP-Rule" id="MF_01852"/>
    </source>
</evidence>
<feature type="chain" id="PRO_0000352957" description="Threonylcarbamoyl-AMP synthase">
    <location>
        <begin position="1"/>
        <end position="185"/>
    </location>
</feature>
<feature type="domain" description="YrdC-like" evidence="1">
    <location>
        <begin position="4"/>
        <end position="185"/>
    </location>
</feature>
<comment type="function">
    <text evidence="1">Required for the formation of a threonylcarbamoyl group on adenosine at position 37 (t(6)A37) in tRNAs that read codons beginning with adenine. Catalyzes the conversion of L-threonine, HCO(3)(-)/CO(2) and ATP to give threonylcarbamoyl-AMP (TC-AMP) as the acyladenylate intermediate, with the release of diphosphate.</text>
</comment>
<comment type="catalytic activity">
    <reaction evidence="1">
        <text>L-threonine + hydrogencarbonate + ATP = L-threonylcarbamoyladenylate + diphosphate + H2O</text>
        <dbReference type="Rhea" id="RHEA:36407"/>
        <dbReference type="ChEBI" id="CHEBI:15377"/>
        <dbReference type="ChEBI" id="CHEBI:17544"/>
        <dbReference type="ChEBI" id="CHEBI:30616"/>
        <dbReference type="ChEBI" id="CHEBI:33019"/>
        <dbReference type="ChEBI" id="CHEBI:57926"/>
        <dbReference type="ChEBI" id="CHEBI:73682"/>
        <dbReference type="EC" id="2.7.7.87"/>
    </reaction>
</comment>
<comment type="subcellular location">
    <subcellularLocation>
        <location evidence="1">Cytoplasm</location>
    </subcellularLocation>
</comment>
<comment type="similarity">
    <text evidence="1">Belongs to the SUA5 family. TsaC subfamily.</text>
</comment>
<protein>
    <recommendedName>
        <fullName evidence="1">Threonylcarbamoyl-AMP synthase</fullName>
        <shortName evidence="1">TC-AMP synthase</shortName>
        <ecNumber evidence="1">2.7.7.87</ecNumber>
    </recommendedName>
    <alternativeName>
        <fullName evidence="1">L-threonylcarbamoyladenylate synthase</fullName>
    </alternativeName>
    <alternativeName>
        <fullName evidence="1">t(6)A37 threonylcarbamoyladenosine biosynthesis protein TsaC</fullName>
    </alternativeName>
    <alternativeName>
        <fullName evidence="1">tRNA threonylcarbamoyladenosine biosynthesis protein TsaC</fullName>
    </alternativeName>
</protein>
<name>TSAC_PSEPK</name>
<sequence>MVSSFRVQQAAREIRAGAVIAYPTEAVWGLGCDPWNEDAVYRLLALKSRPVDKGLILIADNIRQFDFLFEDFPEDWIDRMSSTWPGPNTWLVPHQDLLPEWVTGQHDTVALRVSDHPVVRELCALVGPLISTSCNPGGRPAAKTRLRVEQYFHGQLDLVLGGALGGRKNPSVIRDLATGEVVRPG</sequence>
<organism>
    <name type="scientific">Pseudomonas putida (strain ATCC 47054 / DSM 6125 / CFBP 8728 / NCIMB 11950 / KT2440)</name>
    <dbReference type="NCBI Taxonomy" id="160488"/>
    <lineage>
        <taxon>Bacteria</taxon>
        <taxon>Pseudomonadati</taxon>
        <taxon>Pseudomonadota</taxon>
        <taxon>Gammaproteobacteria</taxon>
        <taxon>Pseudomonadales</taxon>
        <taxon>Pseudomonadaceae</taxon>
        <taxon>Pseudomonas</taxon>
    </lineage>
</organism>